<evidence type="ECO:0000255" key="1">
    <source>
        <dbReference type="HAMAP-Rule" id="MF_00815"/>
    </source>
</evidence>
<reference key="1">
    <citation type="journal article" date="2005" name="Proc. Natl. Acad. Sci. U.S.A.">
        <title>The psychrophilic lifestyle as revealed by the genome sequence of Colwellia psychrerythraea 34H through genomic and proteomic analyses.</title>
        <authorList>
            <person name="Methe B.A."/>
            <person name="Nelson K.E."/>
            <person name="Deming J.W."/>
            <person name="Momen B."/>
            <person name="Melamud E."/>
            <person name="Zhang X."/>
            <person name="Moult J."/>
            <person name="Madupu R."/>
            <person name="Nelson W.C."/>
            <person name="Dodson R.J."/>
            <person name="Brinkac L.M."/>
            <person name="Daugherty S.C."/>
            <person name="Durkin A.S."/>
            <person name="DeBoy R.T."/>
            <person name="Kolonay J.F."/>
            <person name="Sullivan S.A."/>
            <person name="Zhou L."/>
            <person name="Davidsen T.M."/>
            <person name="Wu M."/>
            <person name="Huston A.L."/>
            <person name="Lewis M."/>
            <person name="Weaver B."/>
            <person name="Weidman J.F."/>
            <person name="Khouri H."/>
            <person name="Utterback T.R."/>
            <person name="Feldblyum T.V."/>
            <person name="Fraser C.M."/>
        </authorList>
    </citation>
    <scope>NUCLEOTIDE SEQUENCE [LARGE SCALE GENOMIC DNA]</scope>
    <source>
        <strain>34H / ATCC BAA-681</strain>
    </source>
</reference>
<gene>
    <name evidence="1" type="primary">atpG</name>
    <name type="ordered locus">CPS_0061</name>
</gene>
<sequence>MAVGKEIKTKIASVKNTQKITSAMEMVAASKMRKAQEGMAASRPYATNIRNVIGHIALGNLEYRHPYMEERETKRVGYIVVSTDRGLCGGLNINLFKKVLADAAEKQASGAEVEFGVVGSKATSFFNNMGAKVSAQISGLGDSPSLTDLVGSVAVMLKAYDNGEIDKLYVVYNKFVNTMTQDATIDQLLPLPKSDDEEISHRWDYIYEPDANSLLDKLLVRYIESQVYQGVVENIACEQAARMVAMKAATDNAGDLIDDLQLVYNKARQAAITQELGEIVAGAAAVG</sequence>
<keyword id="KW-0066">ATP synthesis</keyword>
<keyword id="KW-0997">Cell inner membrane</keyword>
<keyword id="KW-1003">Cell membrane</keyword>
<keyword id="KW-0139">CF(1)</keyword>
<keyword id="KW-0375">Hydrogen ion transport</keyword>
<keyword id="KW-0406">Ion transport</keyword>
<keyword id="KW-0472">Membrane</keyword>
<keyword id="KW-0813">Transport</keyword>
<proteinExistence type="inferred from homology"/>
<comment type="function">
    <text evidence="1">Produces ATP from ADP in the presence of a proton gradient across the membrane. The gamma chain is believed to be important in regulating ATPase activity and the flow of protons through the CF(0) complex.</text>
</comment>
<comment type="subunit">
    <text evidence="1">F-type ATPases have 2 components, CF(1) - the catalytic core - and CF(0) - the membrane proton channel. CF(1) has five subunits: alpha(3), beta(3), gamma(1), delta(1), epsilon(1). CF(0) has three main subunits: a, b and c.</text>
</comment>
<comment type="subcellular location">
    <subcellularLocation>
        <location evidence="1">Cell inner membrane</location>
        <topology evidence="1">Peripheral membrane protein</topology>
    </subcellularLocation>
</comment>
<comment type="similarity">
    <text evidence="1">Belongs to the ATPase gamma chain family.</text>
</comment>
<feature type="chain" id="PRO_0000073269" description="ATP synthase gamma chain">
    <location>
        <begin position="1"/>
        <end position="287"/>
    </location>
</feature>
<name>ATPG_COLP3</name>
<protein>
    <recommendedName>
        <fullName evidence="1">ATP synthase gamma chain</fullName>
    </recommendedName>
    <alternativeName>
        <fullName evidence="1">ATP synthase F1 sector gamma subunit</fullName>
    </alternativeName>
    <alternativeName>
        <fullName evidence="1">F-ATPase gamma subunit</fullName>
    </alternativeName>
</protein>
<accession>Q48AW1</accession>
<dbReference type="EMBL" id="CP000083">
    <property type="protein sequence ID" value="AAZ28379.1"/>
    <property type="molecule type" value="Genomic_DNA"/>
</dbReference>
<dbReference type="RefSeq" id="WP_011040936.1">
    <property type="nucleotide sequence ID" value="NC_003910.7"/>
</dbReference>
<dbReference type="SMR" id="Q48AW1"/>
<dbReference type="STRING" id="167879.CPS_0061"/>
<dbReference type="KEGG" id="cps:CPS_0061"/>
<dbReference type="eggNOG" id="COG0224">
    <property type="taxonomic scope" value="Bacteria"/>
</dbReference>
<dbReference type="HOGENOM" id="CLU_050669_0_1_6"/>
<dbReference type="Proteomes" id="UP000000547">
    <property type="component" value="Chromosome"/>
</dbReference>
<dbReference type="GO" id="GO:0005886">
    <property type="term" value="C:plasma membrane"/>
    <property type="evidence" value="ECO:0007669"/>
    <property type="project" value="UniProtKB-SubCell"/>
</dbReference>
<dbReference type="GO" id="GO:0045259">
    <property type="term" value="C:proton-transporting ATP synthase complex"/>
    <property type="evidence" value="ECO:0007669"/>
    <property type="project" value="UniProtKB-KW"/>
</dbReference>
<dbReference type="GO" id="GO:0005524">
    <property type="term" value="F:ATP binding"/>
    <property type="evidence" value="ECO:0007669"/>
    <property type="project" value="UniProtKB-UniRule"/>
</dbReference>
<dbReference type="GO" id="GO:0046933">
    <property type="term" value="F:proton-transporting ATP synthase activity, rotational mechanism"/>
    <property type="evidence" value="ECO:0007669"/>
    <property type="project" value="UniProtKB-UniRule"/>
</dbReference>
<dbReference type="GO" id="GO:0042777">
    <property type="term" value="P:proton motive force-driven plasma membrane ATP synthesis"/>
    <property type="evidence" value="ECO:0007669"/>
    <property type="project" value="UniProtKB-UniRule"/>
</dbReference>
<dbReference type="CDD" id="cd12151">
    <property type="entry name" value="F1-ATPase_gamma"/>
    <property type="match status" value="1"/>
</dbReference>
<dbReference type="FunFam" id="1.10.287.80:FF:000005">
    <property type="entry name" value="ATP synthase gamma chain"/>
    <property type="match status" value="1"/>
</dbReference>
<dbReference type="FunFam" id="3.40.1380.10:FF:000001">
    <property type="entry name" value="ATP synthase gamma chain"/>
    <property type="match status" value="1"/>
</dbReference>
<dbReference type="Gene3D" id="3.40.1380.10">
    <property type="match status" value="1"/>
</dbReference>
<dbReference type="Gene3D" id="1.10.287.80">
    <property type="entry name" value="ATP synthase, gamma subunit, helix hairpin domain"/>
    <property type="match status" value="2"/>
</dbReference>
<dbReference type="HAMAP" id="MF_00815">
    <property type="entry name" value="ATP_synth_gamma_bact"/>
    <property type="match status" value="1"/>
</dbReference>
<dbReference type="InterPro" id="IPR035968">
    <property type="entry name" value="ATP_synth_F1_ATPase_gsu"/>
</dbReference>
<dbReference type="InterPro" id="IPR000131">
    <property type="entry name" value="ATP_synth_F1_gsu"/>
</dbReference>
<dbReference type="InterPro" id="IPR023632">
    <property type="entry name" value="ATP_synth_F1_gsu_CS"/>
</dbReference>
<dbReference type="NCBIfam" id="TIGR01146">
    <property type="entry name" value="ATPsyn_F1gamma"/>
    <property type="match status" value="1"/>
</dbReference>
<dbReference type="NCBIfam" id="NF004144">
    <property type="entry name" value="PRK05621.1-1"/>
    <property type="match status" value="1"/>
</dbReference>
<dbReference type="PANTHER" id="PTHR11693">
    <property type="entry name" value="ATP SYNTHASE GAMMA CHAIN"/>
    <property type="match status" value="1"/>
</dbReference>
<dbReference type="PANTHER" id="PTHR11693:SF22">
    <property type="entry name" value="ATP SYNTHASE SUBUNIT GAMMA, MITOCHONDRIAL"/>
    <property type="match status" value="1"/>
</dbReference>
<dbReference type="Pfam" id="PF00231">
    <property type="entry name" value="ATP-synt"/>
    <property type="match status" value="1"/>
</dbReference>
<dbReference type="PRINTS" id="PR00126">
    <property type="entry name" value="ATPASEGAMMA"/>
</dbReference>
<dbReference type="SUPFAM" id="SSF52943">
    <property type="entry name" value="ATP synthase (F1-ATPase), gamma subunit"/>
    <property type="match status" value="1"/>
</dbReference>
<dbReference type="PROSITE" id="PS00153">
    <property type="entry name" value="ATPASE_GAMMA"/>
    <property type="match status" value="1"/>
</dbReference>
<organism>
    <name type="scientific">Colwellia psychrerythraea (strain 34H / ATCC BAA-681)</name>
    <name type="common">Vibrio psychroerythus</name>
    <dbReference type="NCBI Taxonomy" id="167879"/>
    <lineage>
        <taxon>Bacteria</taxon>
        <taxon>Pseudomonadati</taxon>
        <taxon>Pseudomonadota</taxon>
        <taxon>Gammaproteobacteria</taxon>
        <taxon>Alteromonadales</taxon>
        <taxon>Colwelliaceae</taxon>
        <taxon>Colwellia</taxon>
    </lineage>
</organism>